<dbReference type="EMBL" id="CP000570">
    <property type="protein sequence ID" value="ABN83158.1"/>
    <property type="molecule type" value="Genomic_DNA"/>
</dbReference>
<dbReference type="RefSeq" id="WP_004185283.1">
    <property type="nucleotide sequence ID" value="NC_009074.1"/>
</dbReference>
<dbReference type="SMR" id="A3NF44"/>
<dbReference type="KEGG" id="bpd:BURPS668_3972"/>
<dbReference type="HOGENOM" id="CLU_079215_4_5_4"/>
<dbReference type="GO" id="GO:0005886">
    <property type="term" value="C:plasma membrane"/>
    <property type="evidence" value="ECO:0007669"/>
    <property type="project" value="UniProtKB-SubCell"/>
</dbReference>
<dbReference type="GO" id="GO:0045259">
    <property type="term" value="C:proton-transporting ATP synthase complex"/>
    <property type="evidence" value="ECO:0007669"/>
    <property type="project" value="UniProtKB-KW"/>
</dbReference>
<dbReference type="GO" id="GO:0046933">
    <property type="term" value="F:proton-transporting ATP synthase activity, rotational mechanism"/>
    <property type="evidence" value="ECO:0007669"/>
    <property type="project" value="UniProtKB-UniRule"/>
</dbReference>
<dbReference type="GO" id="GO:0046961">
    <property type="term" value="F:proton-transporting ATPase activity, rotational mechanism"/>
    <property type="evidence" value="ECO:0007669"/>
    <property type="project" value="TreeGrafter"/>
</dbReference>
<dbReference type="CDD" id="cd06503">
    <property type="entry name" value="ATP-synt_Fo_b"/>
    <property type="match status" value="1"/>
</dbReference>
<dbReference type="Gene3D" id="6.10.250.1580">
    <property type="match status" value="1"/>
</dbReference>
<dbReference type="HAMAP" id="MF_01398">
    <property type="entry name" value="ATP_synth_b_bprime"/>
    <property type="match status" value="1"/>
</dbReference>
<dbReference type="InterPro" id="IPR028987">
    <property type="entry name" value="ATP_synth_B-like_membr_sf"/>
</dbReference>
<dbReference type="InterPro" id="IPR002146">
    <property type="entry name" value="ATP_synth_b/b'su_bac/chlpt"/>
</dbReference>
<dbReference type="InterPro" id="IPR005864">
    <property type="entry name" value="ATP_synth_F0_bsu_bac"/>
</dbReference>
<dbReference type="InterPro" id="IPR050059">
    <property type="entry name" value="ATP_synthase_B_chain"/>
</dbReference>
<dbReference type="NCBIfam" id="TIGR01144">
    <property type="entry name" value="ATP_synt_b"/>
    <property type="match status" value="1"/>
</dbReference>
<dbReference type="NCBIfam" id="NF004411">
    <property type="entry name" value="PRK05759.1-2"/>
    <property type="match status" value="1"/>
</dbReference>
<dbReference type="PANTHER" id="PTHR33445:SF1">
    <property type="entry name" value="ATP SYNTHASE SUBUNIT B"/>
    <property type="match status" value="1"/>
</dbReference>
<dbReference type="PANTHER" id="PTHR33445">
    <property type="entry name" value="ATP SYNTHASE SUBUNIT B', CHLOROPLASTIC"/>
    <property type="match status" value="1"/>
</dbReference>
<dbReference type="Pfam" id="PF00430">
    <property type="entry name" value="ATP-synt_B"/>
    <property type="match status" value="1"/>
</dbReference>
<dbReference type="SUPFAM" id="SSF81573">
    <property type="entry name" value="F1F0 ATP synthase subunit B, membrane domain"/>
    <property type="match status" value="1"/>
</dbReference>
<sequence length="156" mass="17122">MNLNATLFAQMVVFLVLAWFTMKFVWPPLINALDERSKKIADGLAAAEKGKAELEAAHKRVDQELAQARNDGQQRIADAEKRALAVADEIKTNAQAEAARIIAQAKAEAEQQIVKARETLRGEVAALAVKGAEQILKREVDQTAHAELLNQLKAEL</sequence>
<reference key="1">
    <citation type="journal article" date="2010" name="Genome Biol. Evol.">
        <title>Continuing evolution of Burkholderia mallei through genome reduction and large-scale rearrangements.</title>
        <authorList>
            <person name="Losada L."/>
            <person name="Ronning C.M."/>
            <person name="DeShazer D."/>
            <person name="Woods D."/>
            <person name="Fedorova N."/>
            <person name="Kim H.S."/>
            <person name="Shabalina S.A."/>
            <person name="Pearson T.R."/>
            <person name="Brinkac L."/>
            <person name="Tan P."/>
            <person name="Nandi T."/>
            <person name="Crabtree J."/>
            <person name="Badger J."/>
            <person name="Beckstrom-Sternberg S."/>
            <person name="Saqib M."/>
            <person name="Schutzer S.E."/>
            <person name="Keim P."/>
            <person name="Nierman W.C."/>
        </authorList>
    </citation>
    <scope>NUCLEOTIDE SEQUENCE [LARGE SCALE GENOMIC DNA]</scope>
    <source>
        <strain>668</strain>
    </source>
</reference>
<proteinExistence type="inferred from homology"/>
<protein>
    <recommendedName>
        <fullName evidence="1">ATP synthase subunit b</fullName>
    </recommendedName>
    <alternativeName>
        <fullName evidence="1">ATP synthase F(0) sector subunit b</fullName>
    </alternativeName>
    <alternativeName>
        <fullName evidence="1">ATPase subunit I</fullName>
    </alternativeName>
    <alternativeName>
        <fullName evidence="1">F-type ATPase subunit b</fullName>
        <shortName evidence="1">F-ATPase subunit b</shortName>
    </alternativeName>
</protein>
<evidence type="ECO:0000255" key="1">
    <source>
        <dbReference type="HAMAP-Rule" id="MF_01398"/>
    </source>
</evidence>
<gene>
    <name evidence="1" type="primary">atpF</name>
    <name type="ordered locus">BURPS668_3972</name>
</gene>
<keyword id="KW-0066">ATP synthesis</keyword>
<keyword id="KW-0997">Cell inner membrane</keyword>
<keyword id="KW-1003">Cell membrane</keyword>
<keyword id="KW-0138">CF(0)</keyword>
<keyword id="KW-0375">Hydrogen ion transport</keyword>
<keyword id="KW-0406">Ion transport</keyword>
<keyword id="KW-0472">Membrane</keyword>
<keyword id="KW-0812">Transmembrane</keyword>
<keyword id="KW-1133">Transmembrane helix</keyword>
<keyword id="KW-0813">Transport</keyword>
<name>ATPF_BURP6</name>
<organism>
    <name type="scientific">Burkholderia pseudomallei (strain 668)</name>
    <dbReference type="NCBI Taxonomy" id="320373"/>
    <lineage>
        <taxon>Bacteria</taxon>
        <taxon>Pseudomonadati</taxon>
        <taxon>Pseudomonadota</taxon>
        <taxon>Betaproteobacteria</taxon>
        <taxon>Burkholderiales</taxon>
        <taxon>Burkholderiaceae</taxon>
        <taxon>Burkholderia</taxon>
        <taxon>pseudomallei group</taxon>
    </lineage>
</organism>
<accession>A3NF44</accession>
<comment type="function">
    <text evidence="1">F(1)F(0) ATP synthase produces ATP from ADP in the presence of a proton or sodium gradient. F-type ATPases consist of two structural domains, F(1) containing the extramembraneous catalytic core and F(0) containing the membrane proton channel, linked together by a central stalk and a peripheral stalk. During catalysis, ATP synthesis in the catalytic domain of F(1) is coupled via a rotary mechanism of the central stalk subunits to proton translocation.</text>
</comment>
<comment type="function">
    <text evidence="1">Component of the F(0) channel, it forms part of the peripheral stalk, linking F(1) to F(0).</text>
</comment>
<comment type="subunit">
    <text evidence="1">F-type ATPases have 2 components, F(1) - the catalytic core - and F(0) - the membrane proton channel. F(1) has five subunits: alpha(3), beta(3), gamma(1), delta(1), epsilon(1). F(0) has three main subunits: a(1), b(2) and c(10-14). The alpha and beta chains form an alternating ring which encloses part of the gamma chain. F(1) is attached to F(0) by a central stalk formed by the gamma and epsilon chains, while a peripheral stalk is formed by the delta and b chains.</text>
</comment>
<comment type="subcellular location">
    <subcellularLocation>
        <location evidence="1">Cell inner membrane</location>
        <topology evidence="1">Single-pass membrane protein</topology>
    </subcellularLocation>
</comment>
<comment type="similarity">
    <text evidence="1">Belongs to the ATPase B chain family.</text>
</comment>
<feature type="chain" id="PRO_0000368394" description="ATP synthase subunit b">
    <location>
        <begin position="1"/>
        <end position="156"/>
    </location>
</feature>
<feature type="transmembrane region" description="Helical" evidence="1">
    <location>
        <begin position="7"/>
        <end position="29"/>
    </location>
</feature>